<proteinExistence type="inferred from homology"/>
<comment type="function">
    <text evidence="1">Na(+)/H(+) antiporter that extrudes sodium in exchange for external protons.</text>
</comment>
<comment type="catalytic activity">
    <reaction evidence="1">
        <text>2 Na(+)(in) + 3 H(+)(out) = 2 Na(+)(out) + 3 H(+)(in)</text>
        <dbReference type="Rhea" id="RHEA:29247"/>
        <dbReference type="ChEBI" id="CHEBI:15378"/>
        <dbReference type="ChEBI" id="CHEBI:29101"/>
    </reaction>
    <physiologicalReaction direction="left-to-right" evidence="1">
        <dbReference type="Rhea" id="RHEA:29248"/>
    </physiologicalReaction>
</comment>
<comment type="subcellular location">
    <subcellularLocation>
        <location evidence="1">Cell inner membrane</location>
        <topology evidence="1">Multi-pass membrane protein</topology>
    </subcellularLocation>
</comment>
<comment type="similarity">
    <text evidence="1">Belongs to the NhaB Na(+)/H(+) (TC 2.A.34) antiporter family.</text>
</comment>
<protein>
    <recommendedName>
        <fullName evidence="1">Na(+)/H(+) antiporter NhaB</fullName>
    </recommendedName>
    <alternativeName>
        <fullName evidence="1">Sodium/proton antiporter NhaB</fullName>
    </alternativeName>
</protein>
<dbReference type="EMBL" id="FM200053">
    <property type="protein sequence ID" value="CAR59147.1"/>
    <property type="molecule type" value="Genomic_DNA"/>
</dbReference>
<dbReference type="RefSeq" id="WP_000406445.1">
    <property type="nucleotide sequence ID" value="NC_011147.1"/>
</dbReference>
<dbReference type="SMR" id="B5BI47"/>
<dbReference type="KEGG" id="sek:SSPA0996"/>
<dbReference type="HOGENOM" id="CLU_041110_0_0_6"/>
<dbReference type="Proteomes" id="UP000001869">
    <property type="component" value="Chromosome"/>
</dbReference>
<dbReference type="GO" id="GO:0005886">
    <property type="term" value="C:plasma membrane"/>
    <property type="evidence" value="ECO:0007669"/>
    <property type="project" value="UniProtKB-SubCell"/>
</dbReference>
<dbReference type="GO" id="GO:0015385">
    <property type="term" value="F:sodium:proton antiporter activity"/>
    <property type="evidence" value="ECO:0007669"/>
    <property type="project" value="InterPro"/>
</dbReference>
<dbReference type="HAMAP" id="MF_01599">
    <property type="entry name" value="NhaB"/>
    <property type="match status" value="1"/>
</dbReference>
<dbReference type="InterPro" id="IPR004671">
    <property type="entry name" value="Na+/H+_antiporter_NhaB"/>
</dbReference>
<dbReference type="NCBIfam" id="TIGR00774">
    <property type="entry name" value="NhaB"/>
    <property type="match status" value="1"/>
</dbReference>
<dbReference type="NCBIfam" id="NF007093">
    <property type="entry name" value="PRK09547.1"/>
    <property type="match status" value="1"/>
</dbReference>
<dbReference type="PANTHER" id="PTHR43302:SF1">
    <property type="entry name" value="NA(+)_H(+) ANTIPORTER NHAB"/>
    <property type="match status" value="1"/>
</dbReference>
<dbReference type="PANTHER" id="PTHR43302">
    <property type="entry name" value="TRANSPORTER ARSB-RELATED"/>
    <property type="match status" value="1"/>
</dbReference>
<dbReference type="Pfam" id="PF06450">
    <property type="entry name" value="NhaB"/>
    <property type="match status" value="1"/>
</dbReference>
<accession>B5BI47</accession>
<keyword id="KW-0050">Antiport</keyword>
<keyword id="KW-0997">Cell inner membrane</keyword>
<keyword id="KW-1003">Cell membrane</keyword>
<keyword id="KW-0406">Ion transport</keyword>
<keyword id="KW-0472">Membrane</keyword>
<keyword id="KW-0915">Sodium</keyword>
<keyword id="KW-0739">Sodium transport</keyword>
<keyword id="KW-0812">Transmembrane</keyword>
<keyword id="KW-1133">Transmembrane helix</keyword>
<keyword id="KW-0813">Transport</keyword>
<feature type="chain" id="PRO_1000191543" description="Na(+)/H(+) antiporter NhaB">
    <location>
        <begin position="1"/>
        <end position="514"/>
    </location>
</feature>
<feature type="transmembrane region" description="Helical" evidence="1">
    <location>
        <begin position="23"/>
        <end position="43"/>
    </location>
</feature>
<feature type="transmembrane region" description="Helical" evidence="1">
    <location>
        <begin position="63"/>
        <end position="83"/>
    </location>
</feature>
<feature type="transmembrane region" description="Helical" evidence="1">
    <location>
        <begin position="97"/>
        <end position="117"/>
    </location>
</feature>
<feature type="transmembrane region" description="Helical" evidence="1">
    <location>
        <begin position="120"/>
        <end position="140"/>
    </location>
</feature>
<feature type="transmembrane region" description="Helical" evidence="1">
    <location>
        <begin position="144"/>
        <end position="164"/>
    </location>
</feature>
<feature type="transmembrane region" description="Helical" evidence="1">
    <location>
        <begin position="202"/>
        <end position="222"/>
    </location>
</feature>
<feature type="transmembrane region" description="Helical" evidence="1">
    <location>
        <begin position="238"/>
        <end position="258"/>
    </location>
</feature>
<feature type="transmembrane region" description="Helical" evidence="1">
    <location>
        <begin position="303"/>
        <end position="323"/>
    </location>
</feature>
<feature type="transmembrane region" description="Helical" evidence="1">
    <location>
        <begin position="357"/>
        <end position="377"/>
    </location>
</feature>
<feature type="transmembrane region" description="Helical" evidence="1">
    <location>
        <begin position="391"/>
        <end position="411"/>
    </location>
</feature>
<feature type="transmembrane region" description="Helical" evidence="1">
    <location>
        <begin position="447"/>
        <end position="467"/>
    </location>
</feature>
<feature type="transmembrane region" description="Helical" evidence="1">
    <location>
        <begin position="475"/>
        <end position="495"/>
    </location>
</feature>
<gene>
    <name evidence="1" type="primary">nhaB</name>
    <name type="ordered locus">SSPA0996</name>
</gene>
<evidence type="ECO:0000255" key="1">
    <source>
        <dbReference type="HAMAP-Rule" id="MF_01599"/>
    </source>
</evidence>
<organism>
    <name type="scientific">Salmonella paratyphi A (strain AKU_12601)</name>
    <dbReference type="NCBI Taxonomy" id="554290"/>
    <lineage>
        <taxon>Bacteria</taxon>
        <taxon>Pseudomonadati</taxon>
        <taxon>Pseudomonadota</taxon>
        <taxon>Gammaproteobacteria</taxon>
        <taxon>Enterobacterales</taxon>
        <taxon>Enterobacteriaceae</taxon>
        <taxon>Salmonella</taxon>
    </lineage>
</organism>
<name>NHAB_SALPK</name>
<reference key="1">
    <citation type="journal article" date="2009" name="BMC Genomics">
        <title>Pseudogene accumulation in the evolutionary histories of Salmonella enterica serovars Paratyphi A and Typhi.</title>
        <authorList>
            <person name="Holt K.E."/>
            <person name="Thomson N.R."/>
            <person name="Wain J."/>
            <person name="Langridge G.C."/>
            <person name="Hasan R."/>
            <person name="Bhutta Z.A."/>
            <person name="Quail M.A."/>
            <person name="Norbertczak H."/>
            <person name="Walker D."/>
            <person name="Simmonds M."/>
            <person name="White B."/>
            <person name="Bason N."/>
            <person name="Mungall K."/>
            <person name="Dougan G."/>
            <person name="Parkhill J."/>
        </authorList>
    </citation>
    <scope>NUCLEOTIDE SEQUENCE [LARGE SCALE GENOMIC DNA]</scope>
    <source>
        <strain>AKU_12601</strain>
    </source>
</reference>
<sequence length="514" mass="56482">MEISWGRAMWRNFLGQSPDWYKLALLVFLIVNPFIFLANPFVAGWLLVAEFIFTLAMALKCYPLLPGGLLAIEAVIIGMTSAAHVREEVAANLEVLLLLMFMVAGIYFMKQLLLFIFTRLLLSIRSKMVLSLAFCVAAAFLSAFLDALTVVAVVISVAVGFYGIYHRVASSRGEENDMLDDSHIDPHYKTVLEQFRGFLRSLMMHAGVGTALGGVMTMVGEPQNLIIAKAAGWHFGDFFLRMSPVTVPVLVCGLLTCMLVEKMRWFGYGETLPEKVRDVLQQFDDQSRKKRTRQDKIKLIVQAVIGVWLVTALALHLAEVGLIGLSVIILATALTGVTDEHAIGKAFTESLPFTALLTVFFSIVAVIIDQHLFAPIIQFVLQASEHAQLTLFYLFNGLLSSISDNVFVGTIYINEAKAAMENGAISLKQFELLAVAINTGTNLPSVATPNGQAAFLFLLTSALAPLIRLSYGRMVWMALPYTIVLTLIGLLCVEFALAPATEWMTQAGWLATLS</sequence>